<feature type="chain" id="PRO_0000216920" description="Fructose-bisphosphate aldolase, cytoplasmic isozyme">
    <location>
        <begin position="1"/>
        <end position="359"/>
    </location>
</feature>
<feature type="active site" description="Proton acceptor" evidence="1">
    <location>
        <position position="184"/>
    </location>
</feature>
<feature type="active site" description="Schiff-base intermediate with dihydroxyacetone-P">
    <location>
        <position position="226"/>
    </location>
</feature>
<feature type="binding site">
    <location>
        <position position="52"/>
    </location>
    <ligand>
        <name>substrate</name>
    </ligand>
</feature>
<feature type="binding site">
    <location>
        <position position="142"/>
    </location>
    <ligand>
        <name>substrate</name>
    </ligand>
</feature>
<feature type="site" description="Necessary for preference for fructose 1,6-bisphosphate over fructose 1-phosphate">
    <location>
        <position position="359"/>
    </location>
</feature>
<dbReference type="EC" id="4.1.2.13"/>
<dbReference type="EMBL" id="AJ005041">
    <property type="protein sequence ID" value="CAA06308.1"/>
    <property type="molecule type" value="mRNA"/>
</dbReference>
<dbReference type="RefSeq" id="NP_001265896.1">
    <property type="nucleotide sequence ID" value="NM_001278967.1"/>
</dbReference>
<dbReference type="SMR" id="O65735"/>
<dbReference type="STRING" id="3827.O65735"/>
<dbReference type="PaxDb" id="3827-XP_004514022.1"/>
<dbReference type="GeneID" id="101501462"/>
<dbReference type="KEGG" id="cam:101501462"/>
<dbReference type="eggNOG" id="KOG1557">
    <property type="taxonomic scope" value="Eukaryota"/>
</dbReference>
<dbReference type="OrthoDB" id="36455at2759"/>
<dbReference type="UniPathway" id="UPA00109">
    <property type="reaction ID" value="UER00183"/>
</dbReference>
<dbReference type="Proteomes" id="UP000087171">
    <property type="component" value="Unplaced"/>
</dbReference>
<dbReference type="GO" id="GO:0005737">
    <property type="term" value="C:cytoplasm"/>
    <property type="evidence" value="ECO:0007669"/>
    <property type="project" value="UniProtKB-SubCell"/>
</dbReference>
<dbReference type="GO" id="GO:0004332">
    <property type="term" value="F:fructose-bisphosphate aldolase activity"/>
    <property type="evidence" value="ECO:0007669"/>
    <property type="project" value="UniProtKB-EC"/>
</dbReference>
<dbReference type="GO" id="GO:0006096">
    <property type="term" value="P:glycolytic process"/>
    <property type="evidence" value="ECO:0007669"/>
    <property type="project" value="UniProtKB-UniPathway"/>
</dbReference>
<dbReference type="CDD" id="cd00948">
    <property type="entry name" value="FBP_aldolase_I_a"/>
    <property type="match status" value="1"/>
</dbReference>
<dbReference type="FunFam" id="3.20.20.70:FF:000068">
    <property type="entry name" value="Fructose-bisphosphate aldolase"/>
    <property type="match status" value="1"/>
</dbReference>
<dbReference type="Gene3D" id="3.20.20.70">
    <property type="entry name" value="Aldolase class I"/>
    <property type="match status" value="1"/>
</dbReference>
<dbReference type="InterPro" id="IPR029768">
    <property type="entry name" value="Aldolase_I_AS"/>
</dbReference>
<dbReference type="InterPro" id="IPR013785">
    <property type="entry name" value="Aldolase_TIM"/>
</dbReference>
<dbReference type="InterPro" id="IPR000741">
    <property type="entry name" value="FBA_I"/>
</dbReference>
<dbReference type="NCBIfam" id="NF033379">
    <property type="entry name" value="FrucBisAld_I"/>
    <property type="match status" value="1"/>
</dbReference>
<dbReference type="PANTHER" id="PTHR11627">
    <property type="entry name" value="FRUCTOSE-BISPHOSPHATE ALDOLASE"/>
    <property type="match status" value="1"/>
</dbReference>
<dbReference type="Pfam" id="PF00274">
    <property type="entry name" value="Glycolytic"/>
    <property type="match status" value="1"/>
</dbReference>
<dbReference type="SUPFAM" id="SSF51569">
    <property type="entry name" value="Aldolase"/>
    <property type="match status" value="1"/>
</dbReference>
<dbReference type="PROSITE" id="PS00158">
    <property type="entry name" value="ALDOLASE_CLASS_I"/>
    <property type="match status" value="1"/>
</dbReference>
<accession>O65735</accession>
<comment type="catalytic activity">
    <reaction>
        <text>beta-D-fructose 1,6-bisphosphate = D-glyceraldehyde 3-phosphate + dihydroxyacetone phosphate</text>
        <dbReference type="Rhea" id="RHEA:14729"/>
        <dbReference type="ChEBI" id="CHEBI:32966"/>
        <dbReference type="ChEBI" id="CHEBI:57642"/>
        <dbReference type="ChEBI" id="CHEBI:59776"/>
        <dbReference type="EC" id="4.1.2.13"/>
    </reaction>
</comment>
<comment type="pathway">
    <text>Carbohydrate degradation; glycolysis; D-glyceraldehyde 3-phosphate and glycerone phosphate from D-glucose: step 4/4.</text>
</comment>
<comment type="subcellular location">
    <subcellularLocation>
        <location>Cytoplasm</location>
    </subcellularLocation>
</comment>
<comment type="similarity">
    <text evidence="2">Belongs to the class I fructose-bisphosphate aldolase family.</text>
</comment>
<keyword id="KW-0963">Cytoplasm</keyword>
<keyword id="KW-0324">Glycolysis</keyword>
<keyword id="KW-0456">Lyase</keyword>
<keyword id="KW-1185">Reference proteome</keyword>
<keyword id="KW-0704">Schiff base</keyword>
<sequence length="359" mass="38452">MSNFKSKYHDELIANAAYIGTPGKGILAADESTGTIGKRLASINVENVETNRRALRELLFTAPNVLQYLSGVILFEETLYQSTAAGKPFVDVLNEAGVLPGIKVDKGTVELAGTDGETTTQGLDGLGARCAKYYEAGARFAKWRAVLKIGPNEPSLSILSIENAYGLARYAVICQENGLVPIVELEILVDGSHDIHKCAAITERVLAATYKALSDHHVLLEGTLLKPNMVTPGSDSPKVAPEVVAEHTVRALQRTVPAAVPAVVFLSGGQSEEEATVNLNAINQVKGKKPWTLSFSFGRALQQSTLKAWSGKEENVKNAQDALLTRAKANSEATLGTYKGNSQLGEGASESLHVKDYKY</sequence>
<gene>
    <name type="primary">ALDC</name>
</gene>
<reference key="1">
    <citation type="online journal article" date="1998" name="Plant Gene Register">
        <title>cDNA and deduced amino-acid sequence of a cytosolic aldolase from Cicer arietinum L. epicotyls.</title>
        <authorList>
            <person name="Dopico B."/>
            <person name="Munoz F.J."/>
            <person name="Labrador E."/>
        </authorList>
        <locator>PGR98-110</locator>
    </citation>
    <scope>NUCLEOTIDE SEQUENCE [MRNA]</scope>
    <source>
        <strain>cv. Castellana</strain>
        <tissue>Etiolated epicotyl</tissue>
    </source>
</reference>
<name>ALF_CICAR</name>
<protein>
    <recommendedName>
        <fullName>Fructose-bisphosphate aldolase, cytoplasmic isozyme</fullName>
        <ecNumber>4.1.2.13</ecNumber>
    </recommendedName>
</protein>
<organism>
    <name type="scientific">Cicer arietinum</name>
    <name type="common">Chickpea</name>
    <name type="synonym">Garbanzo</name>
    <dbReference type="NCBI Taxonomy" id="3827"/>
    <lineage>
        <taxon>Eukaryota</taxon>
        <taxon>Viridiplantae</taxon>
        <taxon>Streptophyta</taxon>
        <taxon>Embryophyta</taxon>
        <taxon>Tracheophyta</taxon>
        <taxon>Spermatophyta</taxon>
        <taxon>Magnoliopsida</taxon>
        <taxon>eudicotyledons</taxon>
        <taxon>Gunneridae</taxon>
        <taxon>Pentapetalae</taxon>
        <taxon>rosids</taxon>
        <taxon>fabids</taxon>
        <taxon>Fabales</taxon>
        <taxon>Fabaceae</taxon>
        <taxon>Papilionoideae</taxon>
        <taxon>50 kb inversion clade</taxon>
        <taxon>NPAAA clade</taxon>
        <taxon>Hologalegina</taxon>
        <taxon>IRL clade</taxon>
        <taxon>Cicereae</taxon>
        <taxon>Cicer</taxon>
    </lineage>
</organism>
<proteinExistence type="evidence at transcript level"/>
<evidence type="ECO:0000250" key="1"/>
<evidence type="ECO:0000305" key="2"/>